<keyword id="KW-0175">Coiled coil</keyword>
<keyword id="KW-0479">Metal-binding</keyword>
<keyword id="KW-0488">Methylation</keyword>
<keyword id="KW-0539">Nucleus</keyword>
<keyword id="KW-1185">Reference proteome</keyword>
<keyword id="KW-0677">Repeat</keyword>
<keyword id="KW-0694">RNA-binding</keyword>
<keyword id="KW-0862">Zinc</keyword>
<keyword id="KW-0863">Zinc-finger</keyword>
<dbReference type="EMBL" id="AK050662">
    <property type="protein sequence ID" value="BAC34368.1"/>
    <property type="molecule type" value="mRNA"/>
</dbReference>
<dbReference type="EMBL" id="BC022677">
    <property type="protein sequence ID" value="AAH22677.1"/>
    <property type="molecule type" value="mRNA"/>
</dbReference>
<dbReference type="CCDS" id="CCDS24281.1"/>
<dbReference type="RefSeq" id="NP_598764.1">
    <property type="nucleotide sequence ID" value="NM_134003.2"/>
</dbReference>
<dbReference type="RefSeq" id="XP_006513076.1">
    <property type="nucleotide sequence ID" value="XM_006513013.3"/>
</dbReference>
<dbReference type="SMR" id="Q8R205"/>
<dbReference type="BioGRID" id="222052">
    <property type="interactions" value="1"/>
</dbReference>
<dbReference type="FunCoup" id="Q8R205">
    <property type="interactions" value="2220"/>
</dbReference>
<dbReference type="STRING" id="10090.ENSMUSP00000042727"/>
<dbReference type="GlyGen" id="Q8R205">
    <property type="glycosylation" value="1 site, 1 O-linked glycan (1 site)"/>
</dbReference>
<dbReference type="iPTMnet" id="Q8R205"/>
<dbReference type="PhosphoSitePlus" id="Q8R205"/>
<dbReference type="PaxDb" id="10090-ENSMUSP00000042727"/>
<dbReference type="PeptideAtlas" id="Q8R205"/>
<dbReference type="ProteomicsDB" id="302110"/>
<dbReference type="Antibodypedia" id="27922">
    <property type="antibodies" value="121 antibodies from 16 providers"/>
</dbReference>
<dbReference type="Ensembl" id="ENSMUST00000040572.10">
    <property type="protein sequence ID" value="ENSMUSP00000042727.4"/>
    <property type="gene ID" value="ENSMUSG00000039810.12"/>
</dbReference>
<dbReference type="GeneID" id="103284"/>
<dbReference type="KEGG" id="mmu:103284"/>
<dbReference type="UCSC" id="uc007hni.1">
    <property type="organism name" value="mouse"/>
</dbReference>
<dbReference type="AGR" id="MGI:2143670"/>
<dbReference type="CTD" id="84872"/>
<dbReference type="MGI" id="MGI:2143670">
    <property type="gene designation" value="Zc3h10"/>
</dbReference>
<dbReference type="VEuPathDB" id="HostDB:ENSMUSG00000039810"/>
<dbReference type="eggNOG" id="KOG2494">
    <property type="taxonomic scope" value="Eukaryota"/>
</dbReference>
<dbReference type="GeneTree" id="ENSGT00950000182897"/>
<dbReference type="HOGENOM" id="CLU_039343_0_0_1"/>
<dbReference type="InParanoid" id="Q8R205"/>
<dbReference type="OMA" id="MSGCLSI"/>
<dbReference type="OrthoDB" id="250836at2759"/>
<dbReference type="PhylomeDB" id="Q8R205"/>
<dbReference type="TreeFam" id="TF321931"/>
<dbReference type="BioGRID-ORCS" id="103284">
    <property type="hits" value="9 hits in 77 CRISPR screens"/>
</dbReference>
<dbReference type="PRO" id="PR:Q8R205"/>
<dbReference type="Proteomes" id="UP000000589">
    <property type="component" value="Chromosome 10"/>
</dbReference>
<dbReference type="RNAct" id="Q8R205">
    <property type="molecule type" value="protein"/>
</dbReference>
<dbReference type="Bgee" id="ENSMUSG00000039810">
    <property type="expression patterns" value="Expressed in ear vesicle and 244 other cell types or tissues"/>
</dbReference>
<dbReference type="ExpressionAtlas" id="Q8R205">
    <property type="expression patterns" value="baseline and differential"/>
</dbReference>
<dbReference type="GO" id="GO:0005634">
    <property type="term" value="C:nucleus"/>
    <property type="evidence" value="ECO:0007669"/>
    <property type="project" value="UniProtKB-SubCell"/>
</dbReference>
<dbReference type="GO" id="GO:0035198">
    <property type="term" value="F:miRNA binding"/>
    <property type="evidence" value="ECO:0000250"/>
    <property type="project" value="UniProtKB"/>
</dbReference>
<dbReference type="GO" id="GO:0008270">
    <property type="term" value="F:zinc ion binding"/>
    <property type="evidence" value="ECO:0007669"/>
    <property type="project" value="UniProtKB-KW"/>
</dbReference>
<dbReference type="GO" id="GO:1903799">
    <property type="term" value="P:negative regulation of miRNA processing"/>
    <property type="evidence" value="ECO:0000250"/>
    <property type="project" value="UniProtKB"/>
</dbReference>
<dbReference type="GO" id="GO:0010608">
    <property type="term" value="P:post-transcriptional regulation of gene expression"/>
    <property type="evidence" value="ECO:0000250"/>
    <property type="project" value="UniProtKB"/>
</dbReference>
<dbReference type="FunFam" id="3.30.1370.210:FF:000003">
    <property type="entry name" value="Zinc finger CCCH domain-containing protein 10"/>
    <property type="match status" value="1"/>
</dbReference>
<dbReference type="Gene3D" id="3.30.1370.210">
    <property type="match status" value="2"/>
</dbReference>
<dbReference type="InterPro" id="IPR000571">
    <property type="entry name" value="Znf_CCCH"/>
</dbReference>
<dbReference type="PANTHER" id="PTHR12675">
    <property type="entry name" value="MUSCLEBLIND-LIKE PROTEIN"/>
    <property type="match status" value="1"/>
</dbReference>
<dbReference type="PANTHER" id="PTHR12675:SF6">
    <property type="entry name" value="ZINC FINGER CCCH DOMAIN-CONTAINING PROTEIN 10"/>
    <property type="match status" value="1"/>
</dbReference>
<dbReference type="Pfam" id="PF00642">
    <property type="entry name" value="zf-CCCH"/>
    <property type="match status" value="2"/>
</dbReference>
<dbReference type="Pfam" id="PF14608">
    <property type="entry name" value="zf-CCCH_2"/>
    <property type="match status" value="1"/>
</dbReference>
<dbReference type="SMART" id="SM00356">
    <property type="entry name" value="ZnF_C3H1"/>
    <property type="match status" value="3"/>
</dbReference>
<dbReference type="PROSITE" id="PS50103">
    <property type="entry name" value="ZF_C3H1"/>
    <property type="match status" value="3"/>
</dbReference>
<feature type="chain" id="PRO_0000281146" description="Zinc finger CCCH domain-containing protein 10">
    <location>
        <begin position="1"/>
        <end position="435"/>
    </location>
</feature>
<feature type="zinc finger region" description="C3H1-type 1" evidence="3">
    <location>
        <begin position="36"/>
        <end position="63"/>
    </location>
</feature>
<feature type="zinc finger region" description="C3H1-type 2" evidence="3">
    <location>
        <begin position="73"/>
        <end position="99"/>
    </location>
</feature>
<feature type="zinc finger region" description="C3H1-type 3" evidence="3">
    <location>
        <begin position="134"/>
        <end position="161"/>
    </location>
</feature>
<feature type="region of interest" description="Disordered" evidence="4">
    <location>
        <begin position="1"/>
        <end position="36"/>
    </location>
</feature>
<feature type="region of interest" description="Disordered" evidence="4">
    <location>
        <begin position="166"/>
        <end position="190"/>
    </location>
</feature>
<feature type="region of interest" description="Disordered" evidence="4">
    <location>
        <begin position="315"/>
        <end position="363"/>
    </location>
</feature>
<feature type="coiled-coil region" evidence="2">
    <location>
        <begin position="235"/>
        <end position="281"/>
    </location>
</feature>
<feature type="compositionally biased region" description="Gly residues" evidence="4">
    <location>
        <begin position="12"/>
        <end position="35"/>
    </location>
</feature>
<feature type="compositionally biased region" description="Gly residues" evidence="4">
    <location>
        <begin position="168"/>
        <end position="179"/>
    </location>
</feature>
<feature type="compositionally biased region" description="Polar residues" evidence="4">
    <location>
        <begin position="315"/>
        <end position="331"/>
    </location>
</feature>
<feature type="compositionally biased region" description="Pro residues" evidence="4">
    <location>
        <begin position="340"/>
        <end position="359"/>
    </location>
</feature>
<feature type="modified residue" description="Omega-N-methylarginine" evidence="5">
    <location>
        <position position="186"/>
    </location>
</feature>
<feature type="modified residue" description="Omega-N-methylarginine" evidence="5">
    <location>
        <position position="187"/>
    </location>
</feature>
<name>ZC3HA_MOUSE</name>
<accession>Q8R205</accession>
<organism>
    <name type="scientific">Mus musculus</name>
    <name type="common">Mouse</name>
    <dbReference type="NCBI Taxonomy" id="10090"/>
    <lineage>
        <taxon>Eukaryota</taxon>
        <taxon>Metazoa</taxon>
        <taxon>Chordata</taxon>
        <taxon>Craniata</taxon>
        <taxon>Vertebrata</taxon>
        <taxon>Euteleostomi</taxon>
        <taxon>Mammalia</taxon>
        <taxon>Eutheria</taxon>
        <taxon>Euarchontoglires</taxon>
        <taxon>Glires</taxon>
        <taxon>Rodentia</taxon>
        <taxon>Myomorpha</taxon>
        <taxon>Muroidea</taxon>
        <taxon>Muridae</taxon>
        <taxon>Murinae</taxon>
        <taxon>Mus</taxon>
        <taxon>Mus</taxon>
    </lineage>
</organism>
<sequence length="435" mass="46121">MPDRDSYANGTGSSGGGPGGGGSEEASGAGTGSGGATSDAICRDFLRNVCKRGKRCRYRHPDMSEVSNLGVSKNEFIFCHDFQNKECSRPNCRFIHGSKEDEDGYKKTGELPPRLRQKVAAGLGLSPADLPNGKEEVPICRDFLKGDCQRGAKCKFRHLQRDFEFDARGGGGTGGGGSTGSAPPGRRHDLYDIYDLPERGFEDHEPGPKRRRGGCCPPDGPHFESYECNLAPLRGVECRLLEEENALLRKRVEELKKQVSNLLATNEVLLEQNAQFRNQAKVMTLSSTAPATEQTLAPTVGTVATFNHGIAQTHTTLSSQALQPRPVSQQELVAPTGAPAAPPTNAAPPAAPPPPPPHLNPEITPLSAALAQTIAQGMAPPPVSMAPVAVSVAPVAPVAVSMAQPLAGITMSHTTTPMVTYPIASQSMRITAMPH</sequence>
<evidence type="ECO:0000250" key="1">
    <source>
        <dbReference type="UniProtKB" id="Q96K80"/>
    </source>
</evidence>
<evidence type="ECO:0000255" key="2"/>
<evidence type="ECO:0000255" key="3">
    <source>
        <dbReference type="PROSITE-ProRule" id="PRU00723"/>
    </source>
</evidence>
<evidence type="ECO:0000256" key="4">
    <source>
        <dbReference type="SAM" id="MobiDB-lite"/>
    </source>
</evidence>
<evidence type="ECO:0007744" key="5">
    <source>
    </source>
</evidence>
<gene>
    <name type="primary">Zc3h10</name>
</gene>
<protein>
    <recommendedName>
        <fullName>Zinc finger CCCH domain-containing protein 10</fullName>
    </recommendedName>
</protein>
<comment type="function">
    <text evidence="1">Specific regulator of miRNA biogenesis. Binds, via the C3H1-type zinc finger domains, to the binding motif 5'-GCAGCGC-3' on microRNA pri-MIR143 and negatively regulates the processing to mature microRNA.</text>
</comment>
<comment type="subcellular location">
    <subcellularLocation>
        <location evidence="1">Nucleus</location>
    </subcellularLocation>
</comment>
<reference key="1">
    <citation type="journal article" date="2005" name="Science">
        <title>The transcriptional landscape of the mammalian genome.</title>
        <authorList>
            <person name="Carninci P."/>
            <person name="Kasukawa T."/>
            <person name="Katayama S."/>
            <person name="Gough J."/>
            <person name="Frith M.C."/>
            <person name="Maeda N."/>
            <person name="Oyama R."/>
            <person name="Ravasi T."/>
            <person name="Lenhard B."/>
            <person name="Wells C."/>
            <person name="Kodzius R."/>
            <person name="Shimokawa K."/>
            <person name="Bajic V.B."/>
            <person name="Brenner S.E."/>
            <person name="Batalov S."/>
            <person name="Forrest A.R."/>
            <person name="Zavolan M."/>
            <person name="Davis M.J."/>
            <person name="Wilming L.G."/>
            <person name="Aidinis V."/>
            <person name="Allen J.E."/>
            <person name="Ambesi-Impiombato A."/>
            <person name="Apweiler R."/>
            <person name="Aturaliya R.N."/>
            <person name="Bailey T.L."/>
            <person name="Bansal M."/>
            <person name="Baxter L."/>
            <person name="Beisel K.W."/>
            <person name="Bersano T."/>
            <person name="Bono H."/>
            <person name="Chalk A.M."/>
            <person name="Chiu K.P."/>
            <person name="Choudhary V."/>
            <person name="Christoffels A."/>
            <person name="Clutterbuck D.R."/>
            <person name="Crowe M.L."/>
            <person name="Dalla E."/>
            <person name="Dalrymple B.P."/>
            <person name="de Bono B."/>
            <person name="Della Gatta G."/>
            <person name="di Bernardo D."/>
            <person name="Down T."/>
            <person name="Engstrom P."/>
            <person name="Fagiolini M."/>
            <person name="Faulkner G."/>
            <person name="Fletcher C.F."/>
            <person name="Fukushima T."/>
            <person name="Furuno M."/>
            <person name="Futaki S."/>
            <person name="Gariboldi M."/>
            <person name="Georgii-Hemming P."/>
            <person name="Gingeras T.R."/>
            <person name="Gojobori T."/>
            <person name="Green R.E."/>
            <person name="Gustincich S."/>
            <person name="Harbers M."/>
            <person name="Hayashi Y."/>
            <person name="Hensch T.K."/>
            <person name="Hirokawa N."/>
            <person name="Hill D."/>
            <person name="Huminiecki L."/>
            <person name="Iacono M."/>
            <person name="Ikeo K."/>
            <person name="Iwama A."/>
            <person name="Ishikawa T."/>
            <person name="Jakt M."/>
            <person name="Kanapin A."/>
            <person name="Katoh M."/>
            <person name="Kawasawa Y."/>
            <person name="Kelso J."/>
            <person name="Kitamura H."/>
            <person name="Kitano H."/>
            <person name="Kollias G."/>
            <person name="Krishnan S.P."/>
            <person name="Kruger A."/>
            <person name="Kummerfeld S.K."/>
            <person name="Kurochkin I.V."/>
            <person name="Lareau L.F."/>
            <person name="Lazarevic D."/>
            <person name="Lipovich L."/>
            <person name="Liu J."/>
            <person name="Liuni S."/>
            <person name="McWilliam S."/>
            <person name="Madan Babu M."/>
            <person name="Madera M."/>
            <person name="Marchionni L."/>
            <person name="Matsuda H."/>
            <person name="Matsuzawa S."/>
            <person name="Miki H."/>
            <person name="Mignone F."/>
            <person name="Miyake S."/>
            <person name="Morris K."/>
            <person name="Mottagui-Tabar S."/>
            <person name="Mulder N."/>
            <person name="Nakano N."/>
            <person name="Nakauchi H."/>
            <person name="Ng P."/>
            <person name="Nilsson R."/>
            <person name="Nishiguchi S."/>
            <person name="Nishikawa S."/>
            <person name="Nori F."/>
            <person name="Ohara O."/>
            <person name="Okazaki Y."/>
            <person name="Orlando V."/>
            <person name="Pang K.C."/>
            <person name="Pavan W.J."/>
            <person name="Pavesi G."/>
            <person name="Pesole G."/>
            <person name="Petrovsky N."/>
            <person name="Piazza S."/>
            <person name="Reed J."/>
            <person name="Reid J.F."/>
            <person name="Ring B.Z."/>
            <person name="Ringwald M."/>
            <person name="Rost B."/>
            <person name="Ruan Y."/>
            <person name="Salzberg S.L."/>
            <person name="Sandelin A."/>
            <person name="Schneider C."/>
            <person name="Schoenbach C."/>
            <person name="Sekiguchi K."/>
            <person name="Semple C.A."/>
            <person name="Seno S."/>
            <person name="Sessa L."/>
            <person name="Sheng Y."/>
            <person name="Shibata Y."/>
            <person name="Shimada H."/>
            <person name="Shimada K."/>
            <person name="Silva D."/>
            <person name="Sinclair B."/>
            <person name="Sperling S."/>
            <person name="Stupka E."/>
            <person name="Sugiura K."/>
            <person name="Sultana R."/>
            <person name="Takenaka Y."/>
            <person name="Taki K."/>
            <person name="Tammoja K."/>
            <person name="Tan S.L."/>
            <person name="Tang S."/>
            <person name="Taylor M.S."/>
            <person name="Tegner J."/>
            <person name="Teichmann S.A."/>
            <person name="Ueda H.R."/>
            <person name="van Nimwegen E."/>
            <person name="Verardo R."/>
            <person name="Wei C.L."/>
            <person name="Yagi K."/>
            <person name="Yamanishi H."/>
            <person name="Zabarovsky E."/>
            <person name="Zhu S."/>
            <person name="Zimmer A."/>
            <person name="Hide W."/>
            <person name="Bult C."/>
            <person name="Grimmond S.M."/>
            <person name="Teasdale R.D."/>
            <person name="Liu E.T."/>
            <person name="Brusic V."/>
            <person name="Quackenbush J."/>
            <person name="Wahlestedt C."/>
            <person name="Mattick J.S."/>
            <person name="Hume D.A."/>
            <person name="Kai C."/>
            <person name="Sasaki D."/>
            <person name="Tomaru Y."/>
            <person name="Fukuda S."/>
            <person name="Kanamori-Katayama M."/>
            <person name="Suzuki M."/>
            <person name="Aoki J."/>
            <person name="Arakawa T."/>
            <person name="Iida J."/>
            <person name="Imamura K."/>
            <person name="Itoh M."/>
            <person name="Kato T."/>
            <person name="Kawaji H."/>
            <person name="Kawagashira N."/>
            <person name="Kawashima T."/>
            <person name="Kojima M."/>
            <person name="Kondo S."/>
            <person name="Konno H."/>
            <person name="Nakano K."/>
            <person name="Ninomiya N."/>
            <person name="Nishio T."/>
            <person name="Okada M."/>
            <person name="Plessy C."/>
            <person name="Shibata K."/>
            <person name="Shiraki T."/>
            <person name="Suzuki S."/>
            <person name="Tagami M."/>
            <person name="Waki K."/>
            <person name="Watahiki A."/>
            <person name="Okamura-Oho Y."/>
            <person name="Suzuki H."/>
            <person name="Kawai J."/>
            <person name="Hayashizaki Y."/>
        </authorList>
    </citation>
    <scope>NUCLEOTIDE SEQUENCE [LARGE SCALE MRNA]</scope>
    <source>
        <strain>C57BL/6J</strain>
        <tissue>Thymus</tissue>
    </source>
</reference>
<reference key="2">
    <citation type="journal article" date="2004" name="Genome Res.">
        <title>The status, quality, and expansion of the NIH full-length cDNA project: the Mammalian Gene Collection (MGC).</title>
        <authorList>
            <consortium name="The MGC Project Team"/>
        </authorList>
    </citation>
    <scope>NUCLEOTIDE SEQUENCE [LARGE SCALE MRNA]</scope>
    <source>
        <strain>FVB/N</strain>
        <tissue>Kidney</tissue>
    </source>
</reference>
<reference key="3">
    <citation type="journal article" date="2014" name="Mol. Cell. Proteomics">
        <title>Immunoaffinity enrichment and mass spectrometry analysis of protein methylation.</title>
        <authorList>
            <person name="Guo A."/>
            <person name="Gu H."/>
            <person name="Zhou J."/>
            <person name="Mulhern D."/>
            <person name="Wang Y."/>
            <person name="Lee K.A."/>
            <person name="Yang V."/>
            <person name="Aguiar M."/>
            <person name="Kornhauser J."/>
            <person name="Jia X."/>
            <person name="Ren J."/>
            <person name="Beausoleil S.A."/>
            <person name="Silva J.C."/>
            <person name="Vemulapalli V."/>
            <person name="Bedford M.T."/>
            <person name="Comb M.J."/>
        </authorList>
    </citation>
    <scope>METHYLATION [LARGE SCALE ANALYSIS] AT ARG-186 AND ARG-187</scope>
    <scope>IDENTIFICATION BY MASS SPECTROMETRY [LARGE SCALE ANALYSIS]</scope>
    <source>
        <tissue>Brain</tissue>
    </source>
</reference>
<proteinExistence type="evidence at protein level"/>